<feature type="chain" id="PRO_0000451214" description="Short-chain dehydrogenase/reductase prx1">
    <location>
        <begin position="1"/>
        <end position="340"/>
    </location>
</feature>
<feature type="active site" description="Proton donor" evidence="2">
    <location>
        <position position="184"/>
    </location>
</feature>
<feature type="active site" description="Proton acceptor" evidence="3">
    <location>
        <position position="210"/>
    </location>
</feature>
<feature type="active site" description="Lowers pKa of active site Tyr" evidence="2">
    <location>
        <position position="214"/>
    </location>
</feature>
<feature type="binding site" evidence="1">
    <location>
        <position position="60"/>
    </location>
    <ligand>
        <name>NADP(+)</name>
        <dbReference type="ChEBI" id="CHEBI:58349"/>
    </ligand>
</feature>
<feature type="binding site" evidence="1">
    <location>
        <position position="84"/>
    </location>
    <ligand>
        <name>NADP(+)</name>
        <dbReference type="ChEBI" id="CHEBI:58349"/>
    </ligand>
</feature>
<feature type="binding site" evidence="1">
    <location>
        <position position="104"/>
    </location>
    <ligand>
        <name>NADP(+)</name>
        <dbReference type="ChEBI" id="CHEBI:58349"/>
    </ligand>
</feature>
<feature type="binding site" evidence="2">
    <location>
        <position position="131"/>
    </location>
    <ligand>
        <name>NADP(+)</name>
        <dbReference type="ChEBI" id="CHEBI:58349"/>
    </ligand>
</feature>
<feature type="binding site" evidence="1">
    <location>
        <position position="162"/>
    </location>
    <ligand>
        <name>NADP(+)</name>
        <dbReference type="ChEBI" id="CHEBI:58349"/>
    </ligand>
</feature>
<feature type="binding site" evidence="2">
    <location>
        <position position="210"/>
    </location>
    <ligand>
        <name>NADP(+)</name>
        <dbReference type="ChEBI" id="CHEBI:58349"/>
    </ligand>
</feature>
<feature type="binding site" evidence="2">
    <location>
        <position position="214"/>
    </location>
    <ligand>
        <name>NADP(+)</name>
        <dbReference type="ChEBI" id="CHEBI:58349"/>
    </ligand>
</feature>
<reference key="1">
    <citation type="journal article" date="2014" name="Nat. Commun.">
        <title>Multiple recent horizontal transfers of a large genomic region in cheese making fungi.</title>
        <authorList>
            <person name="Cheeseman K."/>
            <person name="Ropars J."/>
            <person name="Renault P."/>
            <person name="Dupont J."/>
            <person name="Gouzy J."/>
            <person name="Branca A."/>
            <person name="Abraham A.-L."/>
            <person name="Ceppi M."/>
            <person name="Conseiller E."/>
            <person name="Debuchy R."/>
            <person name="Malagnac F."/>
            <person name="Goarin A."/>
            <person name="Silar P."/>
            <person name="Lacoste S."/>
            <person name="Sallet E."/>
            <person name="Bensimon A."/>
            <person name="Giraud T."/>
            <person name="Brygoo Y."/>
        </authorList>
    </citation>
    <scope>NUCLEOTIDE SEQUENCE [LARGE SCALE GENOMIC DNA]</scope>
    <source>
        <strain>FM164</strain>
    </source>
</reference>
<reference key="2">
    <citation type="journal article" date="1980" name="Appl. Environ. Microbiol.">
        <title>Production of eremofortins A, B, and C relative to formation of PR toxin by Penicillium roqueforti.</title>
        <authorList>
            <person name="Moreau S."/>
            <person name="Lablache-Combier A."/>
            <person name="Biguet J."/>
        </authorList>
    </citation>
    <scope>FUNCTION</scope>
</reference>
<reference key="3">
    <citation type="journal article" date="1993" name="J. Biol. Chem.">
        <title>Aristolochene synthase. Isolation, characterization, and bacterial expression of a sesquiterpenoid biosynthetic gene (Ari1) from Penicillium roqueforti.</title>
        <authorList>
            <person name="Proctor R.H."/>
            <person name="Hohn T.M."/>
        </authorList>
    </citation>
    <scope>FUNCTION</scope>
</reference>
<reference key="4">
    <citation type="journal article" date="2004" name="J. Am. Chem. Soc.">
        <title>Aristolochene synthase: mechanistic analysis of active site residues by site-directed mutagenesis.</title>
        <authorList>
            <person name="Felicetti B."/>
            <person name="Cane D.E."/>
        </authorList>
    </citation>
    <scope>FUNCTION</scope>
</reference>
<reference key="5">
    <citation type="journal article" date="2014" name="Fungal Genet. Biol.">
        <title>Molecular characterization of the PR-toxin gene cluster in Penicillium roqueforti and Penicillium chrysogenum: cross talk of secondary metabolite pathways.</title>
        <authorList>
            <person name="Hidalgo P.I."/>
            <person name="Ullan R.V."/>
            <person name="Albillos S.M."/>
            <person name="Montero O."/>
            <person name="Fernandez-Bodega M.A."/>
            <person name="Garcia-Estrada C."/>
            <person name="Fernandez-Aguado M."/>
            <person name="Martin J.F."/>
        </authorList>
    </citation>
    <scope>FUNCTION</scope>
    <scope>DISRUPTION PHENOTYPE</scope>
    <scope>PATHWAY</scope>
</reference>
<reference key="6">
    <citation type="journal article" date="2015" name="Angew. Chem. Int. Ed.">
        <title>Identification of intermediates in the biosynthesis of PR toxin by Penicillium roqueforti.</title>
        <authorList>
            <person name="Riclea R."/>
            <person name="Dickschat J.S."/>
        </authorList>
    </citation>
    <scope>FUNCTION</scope>
</reference>
<reference key="7">
    <citation type="journal article" date="2017" name="Appl. Microbiol. Biotechnol.">
        <title>Penicillium roqueforti PR toxin gene cluster characterization.</title>
        <authorList>
            <person name="Hidalgo P.I."/>
            <person name="Poirier E."/>
            <person name="Ullan R.V."/>
            <person name="Piqueras J."/>
            <person name="Meslet-Cladiere L."/>
            <person name="Coton E."/>
            <person name="Coton M."/>
        </authorList>
    </citation>
    <scope>FUNCTION</scope>
    <scope>PATHWAY</scope>
</reference>
<dbReference type="EC" id="1.1.99.-" evidence="13"/>
<dbReference type="EMBL" id="HG792016">
    <property type="protein sequence ID" value="CDM31314.1"/>
    <property type="molecule type" value="Genomic_DNA"/>
</dbReference>
<dbReference type="SMR" id="W6QB10"/>
<dbReference type="STRING" id="1365484.W6QB10"/>
<dbReference type="OMA" id="AKTACIW"/>
<dbReference type="OrthoDB" id="191139at2759"/>
<dbReference type="Proteomes" id="UP000030686">
    <property type="component" value="Unassembled WGS sequence"/>
</dbReference>
<dbReference type="GO" id="GO:0016491">
    <property type="term" value="F:oxidoreductase activity"/>
    <property type="evidence" value="ECO:0007669"/>
    <property type="project" value="UniProtKB-KW"/>
</dbReference>
<dbReference type="Gene3D" id="3.40.50.720">
    <property type="entry name" value="NAD(P)-binding Rossmann-like Domain"/>
    <property type="match status" value="1"/>
</dbReference>
<dbReference type="InterPro" id="IPR036291">
    <property type="entry name" value="NAD(P)-bd_dom_sf"/>
</dbReference>
<dbReference type="InterPro" id="IPR002347">
    <property type="entry name" value="SDR_fam"/>
</dbReference>
<dbReference type="PANTHER" id="PTHR24320:SF272">
    <property type="entry name" value="NAD(P)-BINDING ROSSMANN-FOLD SUPERFAMILY PROTEIN"/>
    <property type="match status" value="1"/>
</dbReference>
<dbReference type="PANTHER" id="PTHR24320">
    <property type="entry name" value="RETINOL DEHYDROGENASE"/>
    <property type="match status" value="1"/>
</dbReference>
<dbReference type="Pfam" id="PF00106">
    <property type="entry name" value="adh_short"/>
    <property type="match status" value="1"/>
</dbReference>
<dbReference type="PRINTS" id="PR00081">
    <property type="entry name" value="GDHRDH"/>
</dbReference>
<dbReference type="SUPFAM" id="SSF51735">
    <property type="entry name" value="NAD(P)-binding Rossmann-fold domains"/>
    <property type="match status" value="1"/>
</dbReference>
<evidence type="ECO:0000250" key="1">
    <source>
        <dbReference type="UniProtKB" id="L0E2Z4"/>
    </source>
</evidence>
<evidence type="ECO:0000250" key="2">
    <source>
        <dbReference type="UniProtKB" id="O93868"/>
    </source>
</evidence>
<evidence type="ECO:0000255" key="3">
    <source>
        <dbReference type="PROSITE-ProRule" id="PRU10001"/>
    </source>
</evidence>
<evidence type="ECO:0000269" key="4">
    <source>
    </source>
</evidence>
<evidence type="ECO:0000269" key="5">
    <source>
    </source>
</evidence>
<evidence type="ECO:0000269" key="6">
    <source>
    </source>
</evidence>
<evidence type="ECO:0000269" key="7">
    <source>
    </source>
</evidence>
<evidence type="ECO:0000269" key="8">
    <source>
    </source>
</evidence>
<evidence type="ECO:0000269" key="9">
    <source>
    </source>
</evidence>
<evidence type="ECO:0000303" key="10">
    <source>
    </source>
</evidence>
<evidence type="ECO:0000303" key="11">
    <source>
    </source>
</evidence>
<evidence type="ECO:0000305" key="12"/>
<evidence type="ECO:0000305" key="13">
    <source>
    </source>
</evidence>
<evidence type="ECO:0000305" key="14">
    <source>
    </source>
</evidence>
<comment type="function">
    <text evidence="4 5 6 7 8 9">Short-chain dehydrogenase/reductase; part of the gene cluster that mediates the biosynthesis of PR-toxin, a bicyclic sesquiterpene belonging to the eremophilane class and acting as a mycotoxin (PubMed:24239699, PubMed:27921136). The first step of the pathway is catalyzed by the aristolochene synthase which performs the cyclization of trans,trans-farnesyl diphosphate (FPP) to the bicyclic sesquiterpene aristolochene (PubMed:15186158, PubMed:24239699, PubMed:8440737). Following the formation of aristolochene, the non-oxygenated aristolochene is converted to the trioxygenated intermediate eremofortin B, via 7-epi-neopetasone (PubMed:24239699, PubMed:26274339). This conversion appears to involve three enzymes, a hydroxysterol oxidase-like enzyme, the quinone-oxidase prx3 that forms the quinone-type-structure in the bicyclic nucleus of aristolochene with the C8-oxo group and the C-3 hydroxyl group, and the P450 monooxygenase ORF6 that introduces the epoxide at the double bond between carbons 1 and 2 (PubMed:24239699, PubMed:27921136). No monoxy or dioxy-intermediates have been reported to be released to the broth, so these three early oxidative reactions may be coupled together (PubMed:24239699). Eremofortin B is further oxidized by another P450 monooxygenase, that introduces a second epoxide between carbons 7 and 11 prior to acetylation to eremofortin A by the acetyltransferase ORF8 (PubMed:16345540, PubMed:24239699, PubMed:27921136). The second epoxidation may be performed by a second P450 monooxygenase (PubMed:24239699). After the acetylation step, eremofortin A is converted to eremofortin C and then to PR-toxin (PubMed:24239699). First the conversion of eremofortin A to eremofortin C proceeds by oxidation of the side chain of the molecule at C-12 and is catalyzed by the short-chain oxidoreductase prx1 (PubMed:16345540, PubMed:24239699). The cytochrome P450 monooxygenase ORF6 is probably also involved in this step (PubMed:27921136). The primary alcohol formed at C-12 is finally oxidized by the short-chain alcohol dehydrogenase prx4 that forms PR-toxin (PubMed:16345540, PubMed:24239699).</text>
</comment>
<comment type="pathway">
    <text evidence="6 14">Sesquiterpene biosynthesis.</text>
</comment>
<comment type="disruption phenotype">
    <text evidence="6">Reduces the production of PR-toxin and leads to a large increase in mycophenolic acid production.</text>
</comment>
<comment type="similarity">
    <text evidence="12">Belongs to the short-chain dehydrogenases/reductases (SDR) family.</text>
</comment>
<name>PRX1_PENRF</name>
<keyword id="KW-0521">NADP</keyword>
<keyword id="KW-0560">Oxidoreductase</keyword>
<keyword id="KW-1185">Reference proteome</keyword>
<accession>W6QB10</accession>
<protein>
    <recommendedName>
        <fullName evidence="10">Short-chain dehydrogenase/reductase prx1</fullName>
        <ecNumber evidence="13">1.1.99.-</ecNumber>
    </recommendedName>
    <alternativeName>
        <fullName evidence="10">PR-toxin biosynthesis cluster protein 1</fullName>
    </alternativeName>
</protein>
<organism>
    <name type="scientific">Penicillium roqueforti (strain FM164)</name>
    <dbReference type="NCBI Taxonomy" id="1365484"/>
    <lineage>
        <taxon>Eukaryota</taxon>
        <taxon>Fungi</taxon>
        <taxon>Dikarya</taxon>
        <taxon>Ascomycota</taxon>
        <taxon>Pezizomycotina</taxon>
        <taxon>Eurotiomycetes</taxon>
        <taxon>Eurotiomycetidae</taxon>
        <taxon>Eurotiales</taxon>
        <taxon>Aspergillaceae</taxon>
        <taxon>Penicillium</taxon>
    </lineage>
</organism>
<gene>
    <name evidence="10" type="primary">prx1</name>
    <name evidence="11" type="synonym">ORF1</name>
    <name type="ORF">PROQFM164_S02g001464</name>
</gene>
<sequence>MANPLISNHIGKHGKYTQAFLEQNGPGDARPTALDILKDNDRIDNMKDKVFLLTGSSGGIGIETGRALAATGGKVYLGVRDLEKGKQALAEILEPGRVELLELDVGSMESVRTAAKTFLSKSTQLNVLVNNAGIMACPEAKTVDGFESQLAINYLGHFLLYKLLEQTLLSSSTPEFQSRVVNVSSAGHHMSSVVLDNINLEGEYEPWKAYGNAKTACIWMTNEIEHRYGSKGLHGLSLMPGGIATSLQRHVDPETLKEWGSSEFAQKYAKSSAQGAATTITAALGKEWEGKGGVYLEDCQEAGPVPEGGTLAVGVAPHAFDPEGEKKLWDLSLKMLNLSE</sequence>
<proteinExistence type="inferred from homology"/>